<comment type="function">
    <text evidence="1">Catalyzes the conversion of acetate into acetyl-CoA (AcCoA), an essential intermediate at the junction of anabolic and catabolic pathways. AcsA undergoes a two-step reaction. In the first half reaction, AcsA combines acetate with ATP to form acetyl-adenylate (AcAMP) intermediate. In the second half reaction, it can then transfer the acetyl group from AcAMP to the sulfhydryl group of CoA, forming the product AcCoA.</text>
</comment>
<comment type="catalytic activity">
    <reaction evidence="1">
        <text>acetate + ATP + CoA = acetyl-CoA + AMP + diphosphate</text>
        <dbReference type="Rhea" id="RHEA:23176"/>
        <dbReference type="ChEBI" id="CHEBI:30089"/>
        <dbReference type="ChEBI" id="CHEBI:30616"/>
        <dbReference type="ChEBI" id="CHEBI:33019"/>
        <dbReference type="ChEBI" id="CHEBI:57287"/>
        <dbReference type="ChEBI" id="CHEBI:57288"/>
        <dbReference type="ChEBI" id="CHEBI:456215"/>
        <dbReference type="EC" id="6.2.1.1"/>
    </reaction>
</comment>
<comment type="cofactor">
    <cofactor evidence="1">
        <name>Mg(2+)</name>
        <dbReference type="ChEBI" id="CHEBI:18420"/>
    </cofactor>
</comment>
<comment type="PTM">
    <text evidence="1">Acetylated. Deacetylation by the SIR2-homolog deacetylase activates the enzyme.</text>
</comment>
<comment type="similarity">
    <text evidence="1">Belongs to the ATP-dependent AMP-binding enzyme family.</text>
</comment>
<organism>
    <name type="scientific">Rhizobium rhizogenes</name>
    <name type="common">Agrobacterium rhizogenes</name>
    <dbReference type="NCBI Taxonomy" id="359"/>
    <lineage>
        <taxon>Bacteria</taxon>
        <taxon>Pseudomonadati</taxon>
        <taxon>Pseudomonadota</taxon>
        <taxon>Alphaproteobacteria</taxon>
        <taxon>Hyphomicrobiales</taxon>
        <taxon>Rhizobiaceae</taxon>
        <taxon>Rhizobium/Agrobacterium group</taxon>
        <taxon>Rhizobium</taxon>
    </lineage>
</organism>
<proteinExistence type="inferred from homology"/>
<feature type="chain" id="PRO_0000208351" description="Acetyl-coenzyme A synthetase">
    <location>
        <begin position="1"/>
        <end position="652"/>
    </location>
</feature>
<feature type="binding site" evidence="1">
    <location>
        <begin position="189"/>
        <end position="192"/>
    </location>
    <ligand>
        <name>CoA</name>
        <dbReference type="ChEBI" id="CHEBI:57287"/>
    </ligand>
</feature>
<feature type="binding site" evidence="1">
    <location>
        <position position="311"/>
    </location>
    <ligand>
        <name>CoA</name>
        <dbReference type="ChEBI" id="CHEBI:57287"/>
    </ligand>
</feature>
<feature type="binding site" evidence="1">
    <location>
        <begin position="387"/>
        <end position="389"/>
    </location>
    <ligand>
        <name>ATP</name>
        <dbReference type="ChEBI" id="CHEBI:30616"/>
    </ligand>
</feature>
<feature type="binding site" evidence="1">
    <location>
        <begin position="411"/>
        <end position="416"/>
    </location>
    <ligand>
        <name>ATP</name>
        <dbReference type="ChEBI" id="CHEBI:30616"/>
    </ligand>
</feature>
<feature type="binding site" evidence="1">
    <location>
        <position position="500"/>
    </location>
    <ligand>
        <name>ATP</name>
        <dbReference type="ChEBI" id="CHEBI:30616"/>
    </ligand>
</feature>
<feature type="binding site" evidence="1">
    <location>
        <position position="515"/>
    </location>
    <ligand>
        <name>ATP</name>
        <dbReference type="ChEBI" id="CHEBI:30616"/>
    </ligand>
</feature>
<feature type="binding site" evidence="1">
    <location>
        <position position="523"/>
    </location>
    <ligand>
        <name>CoA</name>
        <dbReference type="ChEBI" id="CHEBI:57287"/>
    </ligand>
</feature>
<feature type="binding site" evidence="1">
    <location>
        <position position="526"/>
    </location>
    <ligand>
        <name>ATP</name>
        <dbReference type="ChEBI" id="CHEBI:30616"/>
    </ligand>
</feature>
<feature type="binding site" evidence="1">
    <location>
        <position position="537"/>
    </location>
    <ligand>
        <name>Mg(2+)</name>
        <dbReference type="ChEBI" id="CHEBI:18420"/>
    </ligand>
</feature>
<feature type="binding site" evidence="1">
    <location>
        <position position="539"/>
    </location>
    <ligand>
        <name>Mg(2+)</name>
        <dbReference type="ChEBI" id="CHEBI:18420"/>
    </ligand>
</feature>
<feature type="binding site" evidence="1">
    <location>
        <position position="542"/>
    </location>
    <ligand>
        <name>Mg(2+)</name>
        <dbReference type="ChEBI" id="CHEBI:18420"/>
    </ligand>
</feature>
<feature type="binding site">
    <location>
        <position position="584"/>
    </location>
    <ligand>
        <name>CoA</name>
        <dbReference type="ChEBI" id="CHEBI:57287"/>
    </ligand>
</feature>
<feature type="modified residue" description="N6-acetyllysine" evidence="1">
    <location>
        <position position="609"/>
    </location>
</feature>
<sequence>MSEKIYPVAKPVESHALINKAEYQEWYAESVADPEQFWGKHGKRIDWFKPYTSVKDTSFTGDVSIKWFEDGETNVSYNCIDRHLATNGDQVAIIWEGDDPSLDRKITYRELYEHVCRMANVLKKHGVKKGDRVTIYMPMVPEAAYAMLACARIGAIHSVVFGGFSPEALGGRIVDCQSTFVITCDEGLRGGKPVPLKANVDKAIDIAARGHVMVKNVLVIRRTGSPLSWAPGRDLWHHEEAATVSADCPPEPMKAEDPLFILYTSGSTGKPKGVLHTTGGYLVYASMTHEYVFDYQHGDIYWCTADVGWVTGHSYIVYGPLANCATTLMFEGIPTFPDAGRFWDVIDKHKVNIFYTAPTAIRSLMGAGDDFVKRSSRSSLRLLGSVGEPINPEAWEWYYHTVGDGRCPVVDTWWQTETGGIMITPLPGATDLKPGSATRPFFGIRPELVDAEGKLIEGAADGNLCIADSWPGQARSVYGDHERFIQTYFSTYEGKYFTGDGCRRDADGYYWITGRVDDVLNVSGHRLGTAEVESALVSHHLVSEAAVVGYPHNIKGQGIYCYVTLMAGSEGSEELRQQLVKHVRAEIGPIASPDKIQFAPGLPKTRSGKIMRRILRKIAEDDFGSLGDTSTLADPAVVDDLIANRQNRAEAA</sequence>
<keyword id="KW-0007">Acetylation</keyword>
<keyword id="KW-0067">ATP-binding</keyword>
<keyword id="KW-0436">Ligase</keyword>
<keyword id="KW-0460">Magnesium</keyword>
<keyword id="KW-0479">Metal-binding</keyword>
<keyword id="KW-0547">Nucleotide-binding</keyword>
<keyword id="KW-0614">Plasmid</keyword>
<geneLocation type="plasmid">
    <name>pRi1724</name>
</geneLocation>
<protein>
    <recommendedName>
        <fullName evidence="1">Acetyl-coenzyme A synthetase</fullName>
        <shortName evidence="1">AcCoA synthetase</shortName>
        <shortName evidence="1">Acs</shortName>
        <ecNumber evidence="1">6.2.1.1</ecNumber>
    </recommendedName>
    <alternativeName>
        <fullName evidence="1">Acetate--CoA ligase</fullName>
    </alternativeName>
    <alternativeName>
        <fullName evidence="1">Acyl-activating enzyme</fullName>
    </alternativeName>
</protein>
<gene>
    <name evidence="1" type="primary">acsA</name>
    <name type="ORF">riorf81</name>
</gene>
<name>ACSA_RHIRH</name>
<reference key="1">
    <citation type="journal article" date="2000" name="DNA Res.">
        <title>Analysis of unique variable region of a plant root inducing plasmid, pRi1724, by the construction of its physical map and library.</title>
        <authorList>
            <person name="Moriguchi K."/>
            <person name="Maeda Y."/>
            <person name="Satou M."/>
            <person name="Kataoka M."/>
            <person name="Tanaka N."/>
            <person name="Yoshida K."/>
        </authorList>
    </citation>
    <scope>NUCLEOTIDE SEQUENCE [GENOMIC DNA]</scope>
    <source>
        <strain>MAFF03-01724</strain>
    </source>
</reference>
<reference key="2">
    <citation type="journal article" date="2001" name="J. Mol. Biol.">
        <title>The complete nucleotide sequence of a plant root-inducing (Ri) plasmid indicates its chimeric structure and evolutionary relationship between tumor-inducing (Ti) and symbiotic (Sym) plasmids in Rhizobiaceae.</title>
        <authorList>
            <person name="Moriguchi K."/>
            <person name="Maeda Y."/>
            <person name="Satou M."/>
            <person name="Hardayani N.S.N."/>
            <person name="Kataoka M."/>
            <person name="Tanaka N."/>
            <person name="Yoshida K."/>
        </authorList>
    </citation>
    <scope>NUCLEOTIDE SEQUENCE [GENOMIC DNA]</scope>
    <source>
        <strain>MAFF03-01724</strain>
    </source>
</reference>
<accession>Q9KWA3</accession>
<dbReference type="EC" id="6.2.1.1" evidence="1"/>
<dbReference type="EMBL" id="AB039932">
    <property type="protein sequence ID" value="BAA97792.1"/>
    <property type="molecule type" value="Genomic_DNA"/>
</dbReference>
<dbReference type="EMBL" id="AP002086">
    <property type="protein sequence ID" value="BAB16200.1"/>
    <property type="molecule type" value="Genomic_DNA"/>
</dbReference>
<dbReference type="RefSeq" id="NP_066662.1">
    <property type="nucleotide sequence ID" value="NC_002575.1"/>
</dbReference>
<dbReference type="SMR" id="Q9KWA3"/>
<dbReference type="eggNOG" id="COG0365">
    <property type="taxonomic scope" value="Bacteria"/>
</dbReference>
<dbReference type="GO" id="GO:0005829">
    <property type="term" value="C:cytosol"/>
    <property type="evidence" value="ECO:0007669"/>
    <property type="project" value="TreeGrafter"/>
</dbReference>
<dbReference type="GO" id="GO:0003987">
    <property type="term" value="F:acetate-CoA ligase activity"/>
    <property type="evidence" value="ECO:0007669"/>
    <property type="project" value="UniProtKB-UniRule"/>
</dbReference>
<dbReference type="GO" id="GO:0016208">
    <property type="term" value="F:AMP binding"/>
    <property type="evidence" value="ECO:0007669"/>
    <property type="project" value="InterPro"/>
</dbReference>
<dbReference type="GO" id="GO:0005524">
    <property type="term" value="F:ATP binding"/>
    <property type="evidence" value="ECO:0007669"/>
    <property type="project" value="UniProtKB-KW"/>
</dbReference>
<dbReference type="GO" id="GO:0046872">
    <property type="term" value="F:metal ion binding"/>
    <property type="evidence" value="ECO:0007669"/>
    <property type="project" value="UniProtKB-KW"/>
</dbReference>
<dbReference type="GO" id="GO:0019427">
    <property type="term" value="P:acetyl-CoA biosynthetic process from acetate"/>
    <property type="evidence" value="ECO:0007669"/>
    <property type="project" value="InterPro"/>
</dbReference>
<dbReference type="CDD" id="cd05966">
    <property type="entry name" value="ACS"/>
    <property type="match status" value="1"/>
</dbReference>
<dbReference type="FunFam" id="3.30.300.30:FF:000004">
    <property type="entry name" value="Acetyl-coenzyme A synthetase"/>
    <property type="match status" value="1"/>
</dbReference>
<dbReference type="FunFam" id="3.40.50.12780:FF:000001">
    <property type="entry name" value="Acetyl-coenzyme A synthetase"/>
    <property type="match status" value="1"/>
</dbReference>
<dbReference type="Gene3D" id="3.30.300.30">
    <property type="match status" value="1"/>
</dbReference>
<dbReference type="Gene3D" id="3.40.50.12780">
    <property type="entry name" value="N-terminal domain of ligase-like"/>
    <property type="match status" value="1"/>
</dbReference>
<dbReference type="HAMAP" id="MF_01123">
    <property type="entry name" value="Ac_CoA_synth"/>
    <property type="match status" value="1"/>
</dbReference>
<dbReference type="InterPro" id="IPR011904">
    <property type="entry name" value="Ac_CoA_lig"/>
</dbReference>
<dbReference type="InterPro" id="IPR032387">
    <property type="entry name" value="ACAS_N"/>
</dbReference>
<dbReference type="InterPro" id="IPR025110">
    <property type="entry name" value="AMP-bd_C"/>
</dbReference>
<dbReference type="InterPro" id="IPR045851">
    <property type="entry name" value="AMP-bd_C_sf"/>
</dbReference>
<dbReference type="InterPro" id="IPR020845">
    <property type="entry name" value="AMP-binding_CS"/>
</dbReference>
<dbReference type="InterPro" id="IPR000873">
    <property type="entry name" value="AMP-dep_synth/lig_dom"/>
</dbReference>
<dbReference type="InterPro" id="IPR042099">
    <property type="entry name" value="ANL_N_sf"/>
</dbReference>
<dbReference type="NCBIfam" id="TIGR02188">
    <property type="entry name" value="Ac_CoA_lig_AcsA"/>
    <property type="match status" value="1"/>
</dbReference>
<dbReference type="NCBIfam" id="NF001208">
    <property type="entry name" value="PRK00174.1"/>
    <property type="match status" value="1"/>
</dbReference>
<dbReference type="PANTHER" id="PTHR24095">
    <property type="entry name" value="ACETYL-COENZYME A SYNTHETASE"/>
    <property type="match status" value="1"/>
</dbReference>
<dbReference type="PANTHER" id="PTHR24095:SF14">
    <property type="entry name" value="ACETYL-COENZYME A SYNTHETASE 1"/>
    <property type="match status" value="1"/>
</dbReference>
<dbReference type="Pfam" id="PF16177">
    <property type="entry name" value="ACAS_N"/>
    <property type="match status" value="1"/>
</dbReference>
<dbReference type="Pfam" id="PF00501">
    <property type="entry name" value="AMP-binding"/>
    <property type="match status" value="1"/>
</dbReference>
<dbReference type="Pfam" id="PF13193">
    <property type="entry name" value="AMP-binding_C"/>
    <property type="match status" value="1"/>
</dbReference>
<dbReference type="SUPFAM" id="SSF56801">
    <property type="entry name" value="Acetyl-CoA synthetase-like"/>
    <property type="match status" value="1"/>
</dbReference>
<dbReference type="PROSITE" id="PS00455">
    <property type="entry name" value="AMP_BINDING"/>
    <property type="match status" value="1"/>
</dbReference>
<evidence type="ECO:0000255" key="1">
    <source>
        <dbReference type="HAMAP-Rule" id="MF_01123"/>
    </source>
</evidence>